<reference key="1">
    <citation type="journal article" date="2007" name="PLoS ONE">
        <title>Genome sequencing shows that European isolates of Francisella tularensis subspecies tularensis are almost identical to US laboratory strain Schu S4.</title>
        <authorList>
            <person name="Chaudhuri R.R."/>
            <person name="Ren C.-P."/>
            <person name="Desmond L."/>
            <person name="Vincent G.A."/>
            <person name="Silman N.J."/>
            <person name="Brehm J.K."/>
            <person name="Elmore M.J."/>
            <person name="Hudson M.J."/>
            <person name="Forsman M."/>
            <person name="Isherwood K.E."/>
            <person name="Gurycova D."/>
            <person name="Minton N.P."/>
            <person name="Titball R.W."/>
            <person name="Pallen M.J."/>
            <person name="Vipond R."/>
        </authorList>
    </citation>
    <scope>NUCLEOTIDE SEQUENCE [LARGE SCALE GENOMIC DNA]</scope>
    <source>
        <strain>FSC 198</strain>
    </source>
</reference>
<proteinExistence type="inferred from homology"/>
<evidence type="ECO:0000255" key="1">
    <source>
        <dbReference type="HAMAP-Rule" id="MF_01310"/>
    </source>
</evidence>
<evidence type="ECO:0000305" key="2"/>
<name>RS11_FRAT1</name>
<gene>
    <name evidence="1" type="primary">rpsK</name>
    <name type="ordered locus">FTF0348</name>
</gene>
<dbReference type="EMBL" id="AM286280">
    <property type="protein sequence ID" value="CAL08364.1"/>
    <property type="molecule type" value="Genomic_DNA"/>
</dbReference>
<dbReference type="RefSeq" id="WP_003021583.1">
    <property type="nucleotide sequence ID" value="NC_008245.1"/>
</dbReference>
<dbReference type="SMR" id="Q14J97"/>
<dbReference type="GeneID" id="93254573"/>
<dbReference type="KEGG" id="ftf:FTF0348"/>
<dbReference type="HOGENOM" id="CLU_072439_5_0_6"/>
<dbReference type="GO" id="GO:1990904">
    <property type="term" value="C:ribonucleoprotein complex"/>
    <property type="evidence" value="ECO:0007669"/>
    <property type="project" value="UniProtKB-KW"/>
</dbReference>
<dbReference type="GO" id="GO:0005840">
    <property type="term" value="C:ribosome"/>
    <property type="evidence" value="ECO:0007669"/>
    <property type="project" value="UniProtKB-KW"/>
</dbReference>
<dbReference type="GO" id="GO:0019843">
    <property type="term" value="F:rRNA binding"/>
    <property type="evidence" value="ECO:0007669"/>
    <property type="project" value="UniProtKB-UniRule"/>
</dbReference>
<dbReference type="GO" id="GO:0003735">
    <property type="term" value="F:structural constituent of ribosome"/>
    <property type="evidence" value="ECO:0007669"/>
    <property type="project" value="InterPro"/>
</dbReference>
<dbReference type="GO" id="GO:0006412">
    <property type="term" value="P:translation"/>
    <property type="evidence" value="ECO:0007669"/>
    <property type="project" value="UniProtKB-UniRule"/>
</dbReference>
<dbReference type="FunFam" id="3.30.420.80:FF:000001">
    <property type="entry name" value="30S ribosomal protein S11"/>
    <property type="match status" value="1"/>
</dbReference>
<dbReference type="Gene3D" id="3.30.420.80">
    <property type="entry name" value="Ribosomal protein S11"/>
    <property type="match status" value="1"/>
</dbReference>
<dbReference type="HAMAP" id="MF_01310">
    <property type="entry name" value="Ribosomal_uS11"/>
    <property type="match status" value="1"/>
</dbReference>
<dbReference type="InterPro" id="IPR001971">
    <property type="entry name" value="Ribosomal_uS11"/>
</dbReference>
<dbReference type="InterPro" id="IPR019981">
    <property type="entry name" value="Ribosomal_uS11_bac-type"/>
</dbReference>
<dbReference type="InterPro" id="IPR018102">
    <property type="entry name" value="Ribosomal_uS11_CS"/>
</dbReference>
<dbReference type="InterPro" id="IPR036967">
    <property type="entry name" value="Ribosomal_uS11_sf"/>
</dbReference>
<dbReference type="NCBIfam" id="NF003698">
    <property type="entry name" value="PRK05309.1"/>
    <property type="match status" value="1"/>
</dbReference>
<dbReference type="NCBIfam" id="TIGR03632">
    <property type="entry name" value="uS11_bact"/>
    <property type="match status" value="1"/>
</dbReference>
<dbReference type="PANTHER" id="PTHR11759">
    <property type="entry name" value="40S RIBOSOMAL PROTEIN S14/30S RIBOSOMAL PROTEIN S11"/>
    <property type="match status" value="1"/>
</dbReference>
<dbReference type="Pfam" id="PF00411">
    <property type="entry name" value="Ribosomal_S11"/>
    <property type="match status" value="1"/>
</dbReference>
<dbReference type="PIRSF" id="PIRSF002131">
    <property type="entry name" value="Ribosomal_S11"/>
    <property type="match status" value="1"/>
</dbReference>
<dbReference type="SUPFAM" id="SSF53137">
    <property type="entry name" value="Translational machinery components"/>
    <property type="match status" value="1"/>
</dbReference>
<dbReference type="PROSITE" id="PS00054">
    <property type="entry name" value="RIBOSOMAL_S11"/>
    <property type="match status" value="1"/>
</dbReference>
<feature type="chain" id="PRO_0000294759" description="Small ribosomal subunit protein uS11">
    <location>
        <begin position="1"/>
        <end position="129"/>
    </location>
</feature>
<comment type="function">
    <text evidence="1">Located on the platform of the 30S subunit, it bridges several disparate RNA helices of the 16S rRNA. Forms part of the Shine-Dalgarno cleft in the 70S ribosome.</text>
</comment>
<comment type="subunit">
    <text evidence="1">Part of the 30S ribosomal subunit. Interacts with proteins S7 and S18. Binds to IF-3.</text>
</comment>
<comment type="similarity">
    <text evidence="1">Belongs to the universal ribosomal protein uS11 family.</text>
</comment>
<organism>
    <name type="scientific">Francisella tularensis subsp. tularensis (strain FSC 198)</name>
    <dbReference type="NCBI Taxonomy" id="393115"/>
    <lineage>
        <taxon>Bacteria</taxon>
        <taxon>Pseudomonadati</taxon>
        <taxon>Pseudomonadota</taxon>
        <taxon>Gammaproteobacteria</taxon>
        <taxon>Thiotrichales</taxon>
        <taxon>Francisellaceae</taxon>
        <taxon>Francisella</taxon>
    </lineage>
</organism>
<keyword id="KW-0687">Ribonucleoprotein</keyword>
<keyword id="KW-0689">Ribosomal protein</keyword>
<keyword id="KW-0694">RNA-binding</keyword>
<keyword id="KW-0699">rRNA-binding</keyword>
<sequence length="129" mass="13752">MAKSVRSSKKKVKRVVTDAVAHIYSSFNNTIVTITDRQGNALSWATSGGSGFRGSRKSTPFAAQVAAERAADMALEYGVKNVDVLVKGPGSGRDSAVRALNAKNLKVTSITDVTPLPHNGCRPPKKRRV</sequence>
<protein>
    <recommendedName>
        <fullName evidence="1">Small ribosomal subunit protein uS11</fullName>
    </recommendedName>
    <alternativeName>
        <fullName evidence="2">30S ribosomal protein S11</fullName>
    </alternativeName>
</protein>
<accession>Q14J97</accession>